<proteinExistence type="evidence at protein level"/>
<reference key="1">
    <citation type="journal article" date="2004" name="Nat. Genet.">
        <title>Complete sequencing and characterization of 21,243 full-length human cDNAs.</title>
        <authorList>
            <person name="Ota T."/>
            <person name="Suzuki Y."/>
            <person name="Nishikawa T."/>
            <person name="Otsuki T."/>
            <person name="Sugiyama T."/>
            <person name="Irie R."/>
            <person name="Wakamatsu A."/>
            <person name="Hayashi K."/>
            <person name="Sato H."/>
            <person name="Nagai K."/>
            <person name="Kimura K."/>
            <person name="Makita H."/>
            <person name="Sekine M."/>
            <person name="Obayashi M."/>
            <person name="Nishi T."/>
            <person name="Shibahara T."/>
            <person name="Tanaka T."/>
            <person name="Ishii S."/>
            <person name="Yamamoto J."/>
            <person name="Saito K."/>
            <person name="Kawai Y."/>
            <person name="Isono Y."/>
            <person name="Nakamura Y."/>
            <person name="Nagahari K."/>
            <person name="Murakami K."/>
            <person name="Yasuda T."/>
            <person name="Iwayanagi T."/>
            <person name="Wagatsuma M."/>
            <person name="Shiratori A."/>
            <person name="Sudo H."/>
            <person name="Hosoiri T."/>
            <person name="Kaku Y."/>
            <person name="Kodaira H."/>
            <person name="Kondo H."/>
            <person name="Sugawara M."/>
            <person name="Takahashi M."/>
            <person name="Kanda K."/>
            <person name="Yokoi T."/>
            <person name="Furuya T."/>
            <person name="Kikkawa E."/>
            <person name="Omura Y."/>
            <person name="Abe K."/>
            <person name="Kamihara K."/>
            <person name="Katsuta N."/>
            <person name="Sato K."/>
            <person name="Tanikawa M."/>
            <person name="Yamazaki M."/>
            <person name="Ninomiya K."/>
            <person name="Ishibashi T."/>
            <person name="Yamashita H."/>
            <person name="Murakawa K."/>
            <person name="Fujimori K."/>
            <person name="Tanai H."/>
            <person name="Kimata M."/>
            <person name="Watanabe M."/>
            <person name="Hiraoka S."/>
            <person name="Chiba Y."/>
            <person name="Ishida S."/>
            <person name="Ono Y."/>
            <person name="Takiguchi S."/>
            <person name="Watanabe S."/>
            <person name="Yosida M."/>
            <person name="Hotuta T."/>
            <person name="Kusano J."/>
            <person name="Kanehori K."/>
            <person name="Takahashi-Fujii A."/>
            <person name="Hara H."/>
            <person name="Tanase T.-O."/>
            <person name="Nomura Y."/>
            <person name="Togiya S."/>
            <person name="Komai F."/>
            <person name="Hara R."/>
            <person name="Takeuchi K."/>
            <person name="Arita M."/>
            <person name="Imose N."/>
            <person name="Musashino K."/>
            <person name="Yuuki H."/>
            <person name="Oshima A."/>
            <person name="Sasaki N."/>
            <person name="Aotsuka S."/>
            <person name="Yoshikawa Y."/>
            <person name="Matsunawa H."/>
            <person name="Ichihara T."/>
            <person name="Shiohata N."/>
            <person name="Sano S."/>
            <person name="Moriya S."/>
            <person name="Momiyama H."/>
            <person name="Satoh N."/>
            <person name="Takami S."/>
            <person name="Terashima Y."/>
            <person name="Suzuki O."/>
            <person name="Nakagawa S."/>
            <person name="Senoh A."/>
            <person name="Mizoguchi H."/>
            <person name="Goto Y."/>
            <person name="Shimizu F."/>
            <person name="Wakebe H."/>
            <person name="Hishigaki H."/>
            <person name="Watanabe T."/>
            <person name="Sugiyama A."/>
            <person name="Takemoto M."/>
            <person name="Kawakami B."/>
            <person name="Yamazaki M."/>
            <person name="Watanabe K."/>
            <person name="Kumagai A."/>
            <person name="Itakura S."/>
            <person name="Fukuzumi Y."/>
            <person name="Fujimori Y."/>
            <person name="Komiyama M."/>
            <person name="Tashiro H."/>
            <person name="Tanigami A."/>
            <person name="Fujiwara T."/>
            <person name="Ono T."/>
            <person name="Yamada K."/>
            <person name="Fujii Y."/>
            <person name="Ozaki K."/>
            <person name="Hirao M."/>
            <person name="Ohmori Y."/>
            <person name="Kawabata A."/>
            <person name="Hikiji T."/>
            <person name="Kobatake N."/>
            <person name="Inagaki H."/>
            <person name="Ikema Y."/>
            <person name="Okamoto S."/>
            <person name="Okitani R."/>
            <person name="Kawakami T."/>
            <person name="Noguchi S."/>
            <person name="Itoh T."/>
            <person name="Shigeta K."/>
            <person name="Senba T."/>
            <person name="Matsumura K."/>
            <person name="Nakajima Y."/>
            <person name="Mizuno T."/>
            <person name="Morinaga M."/>
            <person name="Sasaki M."/>
            <person name="Togashi T."/>
            <person name="Oyama M."/>
            <person name="Hata H."/>
            <person name="Watanabe M."/>
            <person name="Komatsu T."/>
            <person name="Mizushima-Sugano J."/>
            <person name="Satoh T."/>
            <person name="Shirai Y."/>
            <person name="Takahashi Y."/>
            <person name="Nakagawa K."/>
            <person name="Okumura K."/>
            <person name="Nagase T."/>
            <person name="Nomura N."/>
            <person name="Kikuchi H."/>
            <person name="Masuho Y."/>
            <person name="Yamashita R."/>
            <person name="Nakai K."/>
            <person name="Yada T."/>
            <person name="Nakamura Y."/>
            <person name="Ohara O."/>
            <person name="Isogai T."/>
            <person name="Sugano S."/>
        </authorList>
    </citation>
    <scope>NUCLEOTIDE SEQUENCE [LARGE SCALE MRNA] (ISOFORM 2)</scope>
</reference>
<reference key="2">
    <citation type="journal article" date="2004" name="Nature">
        <title>The sequence and analysis of duplication-rich human chromosome 16.</title>
        <authorList>
            <person name="Martin J."/>
            <person name="Han C."/>
            <person name="Gordon L.A."/>
            <person name="Terry A."/>
            <person name="Prabhakar S."/>
            <person name="She X."/>
            <person name="Xie G."/>
            <person name="Hellsten U."/>
            <person name="Chan Y.M."/>
            <person name="Altherr M."/>
            <person name="Couronne O."/>
            <person name="Aerts A."/>
            <person name="Bajorek E."/>
            <person name="Black S."/>
            <person name="Blumer H."/>
            <person name="Branscomb E."/>
            <person name="Brown N.C."/>
            <person name="Bruno W.J."/>
            <person name="Buckingham J.M."/>
            <person name="Callen D.F."/>
            <person name="Campbell C.S."/>
            <person name="Campbell M.L."/>
            <person name="Campbell E.W."/>
            <person name="Caoile C."/>
            <person name="Challacombe J.F."/>
            <person name="Chasteen L.A."/>
            <person name="Chertkov O."/>
            <person name="Chi H.C."/>
            <person name="Christensen M."/>
            <person name="Clark L.M."/>
            <person name="Cohn J.D."/>
            <person name="Denys M."/>
            <person name="Detter J.C."/>
            <person name="Dickson M."/>
            <person name="Dimitrijevic-Bussod M."/>
            <person name="Escobar J."/>
            <person name="Fawcett J.J."/>
            <person name="Flowers D."/>
            <person name="Fotopulos D."/>
            <person name="Glavina T."/>
            <person name="Gomez M."/>
            <person name="Gonzales E."/>
            <person name="Goodstein D."/>
            <person name="Goodwin L.A."/>
            <person name="Grady D.L."/>
            <person name="Grigoriev I."/>
            <person name="Groza M."/>
            <person name="Hammon N."/>
            <person name="Hawkins T."/>
            <person name="Haydu L."/>
            <person name="Hildebrand C.E."/>
            <person name="Huang W."/>
            <person name="Israni S."/>
            <person name="Jett J."/>
            <person name="Jewett P.B."/>
            <person name="Kadner K."/>
            <person name="Kimball H."/>
            <person name="Kobayashi A."/>
            <person name="Krawczyk M.-C."/>
            <person name="Leyba T."/>
            <person name="Longmire J.L."/>
            <person name="Lopez F."/>
            <person name="Lou Y."/>
            <person name="Lowry S."/>
            <person name="Ludeman T."/>
            <person name="Manohar C.F."/>
            <person name="Mark G.A."/>
            <person name="McMurray K.L."/>
            <person name="Meincke L.J."/>
            <person name="Morgan J."/>
            <person name="Moyzis R.K."/>
            <person name="Mundt M.O."/>
            <person name="Munk A.C."/>
            <person name="Nandkeshwar R.D."/>
            <person name="Pitluck S."/>
            <person name="Pollard M."/>
            <person name="Predki P."/>
            <person name="Parson-Quintana B."/>
            <person name="Ramirez L."/>
            <person name="Rash S."/>
            <person name="Retterer J."/>
            <person name="Ricke D.O."/>
            <person name="Robinson D.L."/>
            <person name="Rodriguez A."/>
            <person name="Salamov A."/>
            <person name="Saunders E.H."/>
            <person name="Scott D."/>
            <person name="Shough T."/>
            <person name="Stallings R.L."/>
            <person name="Stalvey M."/>
            <person name="Sutherland R.D."/>
            <person name="Tapia R."/>
            <person name="Tesmer J.G."/>
            <person name="Thayer N."/>
            <person name="Thompson L.S."/>
            <person name="Tice H."/>
            <person name="Torney D.C."/>
            <person name="Tran-Gyamfi M."/>
            <person name="Tsai M."/>
            <person name="Ulanovsky L.E."/>
            <person name="Ustaszewska A."/>
            <person name="Vo N."/>
            <person name="White P.S."/>
            <person name="Williams A.L."/>
            <person name="Wills P.L."/>
            <person name="Wu J.-R."/>
            <person name="Wu K."/>
            <person name="Yang J."/>
            <person name="DeJong P."/>
            <person name="Bruce D."/>
            <person name="Doggett N.A."/>
            <person name="Deaven L."/>
            <person name="Schmutz J."/>
            <person name="Grimwood J."/>
            <person name="Richardson P."/>
            <person name="Rokhsar D.S."/>
            <person name="Eichler E.E."/>
            <person name="Gilna P."/>
            <person name="Lucas S.M."/>
            <person name="Myers R.M."/>
            <person name="Rubin E.M."/>
            <person name="Pennacchio L.A."/>
        </authorList>
    </citation>
    <scope>NUCLEOTIDE SEQUENCE [LARGE SCALE GENOMIC DNA]</scope>
</reference>
<reference key="3">
    <citation type="journal article" date="1997" name="Hum. Genet.">
        <title>cDNAs with long CAG trinucleotide repeats from human brain.</title>
        <authorList>
            <person name="Margolis R.L."/>
            <person name="Abraham M.R."/>
            <person name="Gatchell S.B."/>
            <person name="Li S.-H."/>
            <person name="Kidwai A.S."/>
            <person name="Breschel T.S."/>
            <person name="Stine O.C."/>
            <person name="Callahan C."/>
            <person name="McInnis M.G."/>
            <person name="Ross C.A."/>
        </authorList>
    </citation>
    <scope>NUCLEOTIDE SEQUENCE [MRNA] OF 246-576 (ISOFORM 1/2)</scope>
    <source>
        <tissue>Brain</tissue>
    </source>
</reference>
<reference key="4">
    <citation type="journal article" date="2011" name="J. Cell Sci.">
        <title>TOX3 is a neuronal survival factor that induces transcription depending on the presence of CITED1 or phosphorylated CREB in the transcriptionally active complex.</title>
        <authorList>
            <person name="Dittmer S."/>
            <person name="Kovacs Z."/>
            <person name="Yuan S.H."/>
            <person name="Siszler G."/>
            <person name="Kogl M."/>
            <person name="Summer H."/>
            <person name="Geerts A."/>
            <person name="Golz S."/>
            <person name="Shioda T."/>
            <person name="Methner A."/>
        </authorList>
    </citation>
    <scope>FUNCTION</scope>
    <scope>HOMODIMERIZATION</scope>
    <scope>INTERACTION WITH CITED1 AND CREB1</scope>
    <scope>ASSOCIATION WITH CHROMATIN</scope>
    <scope>INDUCTION</scope>
    <scope>TISSUE SPECIFICITY</scope>
</reference>
<name>TOX3_HUMAN</name>
<comment type="function">
    <text evidence="4">Transcriptional coactivator of the p300/CBP-mediated transcription complex. Activates transactivation through cAMP response element (CRE) sites. Protects against cell death by inducing antiapoptotic and repressing pro-apoptotic transcripts. Stimulates transcription from the estrogen-responsive or BCL-2 promoters. Required for depolarization-induced transcription activation of the C-FOS promoter in neurons. Associates with chromatin to the estrogen-responsive C3 promoter region.</text>
</comment>
<comment type="subunit">
    <text evidence="1 4">Homodimer. Interacts with CREB1; the interaction is not depolarization dependent. Interacts with CREBBP (via C-terminus) (By similarity). Interacts (via HGM box) with CITED1 (via C-terminus); the interaction increases estrogen-response element (ERE)-dependent transcription and protection against cell death. Interacts with CREB1 (phosphorylated form).</text>
</comment>
<comment type="subcellular location">
    <subcellularLocation>
        <location evidence="6">Nucleus</location>
    </subcellularLocation>
</comment>
<comment type="alternative products">
    <event type="alternative splicing"/>
    <isoform>
        <id>O15405-1</id>
        <name>1</name>
        <sequence type="displayed"/>
    </isoform>
    <isoform>
        <id>O15405-2</id>
        <name>2</name>
        <sequence type="described" ref="VSP_043095 VSP_043096"/>
    </isoform>
</comment>
<comment type="tissue specificity">
    <text evidence="4">Expressed mainly in epithelial cells. Expressed in the central nervous system (CNS), in the ileum and within the brain in the frontal and occipital lobe.</text>
</comment>
<comment type="induction">
    <text evidence="4">Up-regulated by GPR39 in neuronal cells.</text>
</comment>
<comment type="domain">
    <text evidence="1">The C-terminus is required for calcium responsiveness but not for transactivation activity.</text>
</comment>
<comment type="domain">
    <text evidence="1">The N-terminus is absolutely necessary for transactivation activity.</text>
</comment>
<organism>
    <name type="scientific">Homo sapiens</name>
    <name type="common">Human</name>
    <dbReference type="NCBI Taxonomy" id="9606"/>
    <lineage>
        <taxon>Eukaryota</taxon>
        <taxon>Metazoa</taxon>
        <taxon>Chordata</taxon>
        <taxon>Craniata</taxon>
        <taxon>Vertebrata</taxon>
        <taxon>Euteleostomi</taxon>
        <taxon>Mammalia</taxon>
        <taxon>Eutheria</taxon>
        <taxon>Euarchontoglires</taxon>
        <taxon>Primates</taxon>
        <taxon>Haplorrhini</taxon>
        <taxon>Catarrhini</taxon>
        <taxon>Hominidae</taxon>
        <taxon>Homo</taxon>
    </lineage>
</organism>
<evidence type="ECO:0000250" key="1"/>
<evidence type="ECO:0000255" key="2">
    <source>
        <dbReference type="PROSITE-ProRule" id="PRU00267"/>
    </source>
</evidence>
<evidence type="ECO:0000256" key="3">
    <source>
        <dbReference type="SAM" id="MobiDB-lite"/>
    </source>
</evidence>
<evidence type="ECO:0000269" key="4">
    <source>
    </source>
</evidence>
<evidence type="ECO:0000303" key="5">
    <source>
    </source>
</evidence>
<evidence type="ECO:0000305" key="6"/>
<keyword id="KW-0010">Activator</keyword>
<keyword id="KW-0025">Alternative splicing</keyword>
<keyword id="KW-0053">Apoptosis</keyword>
<keyword id="KW-0238">DNA-binding</keyword>
<keyword id="KW-0539">Nucleus</keyword>
<keyword id="KW-1267">Proteomics identification</keyword>
<keyword id="KW-1185">Reference proteome</keyword>
<keyword id="KW-0804">Transcription</keyword>
<keyword id="KW-0805">Transcription regulation</keyword>
<dbReference type="EMBL" id="AK299202">
    <property type="protein sequence ID" value="BAG61242.1"/>
    <property type="molecule type" value="mRNA"/>
</dbReference>
<dbReference type="EMBL" id="AC007490">
    <property type="status" value="NOT_ANNOTATED_CDS"/>
    <property type="molecule type" value="Genomic_DNA"/>
</dbReference>
<dbReference type="EMBL" id="U80736">
    <property type="protein sequence ID" value="AAB91435.1"/>
    <property type="molecule type" value="mRNA"/>
</dbReference>
<dbReference type="CCDS" id="CCDS54008.1">
    <molecule id="O15405-2"/>
</dbReference>
<dbReference type="CCDS" id="CCDS54009.1">
    <molecule id="O15405-1"/>
</dbReference>
<dbReference type="RefSeq" id="NP_001073899.2">
    <molecule id="O15405-1"/>
    <property type="nucleotide sequence ID" value="NM_001080430.4"/>
</dbReference>
<dbReference type="RefSeq" id="NP_001139660.1">
    <molecule id="O15405-2"/>
    <property type="nucleotide sequence ID" value="NM_001146188.2"/>
</dbReference>
<dbReference type="SMR" id="O15405"/>
<dbReference type="BioGRID" id="118139">
    <property type="interactions" value="30"/>
</dbReference>
<dbReference type="FunCoup" id="O15405">
    <property type="interactions" value="2481"/>
</dbReference>
<dbReference type="IntAct" id="O15405">
    <property type="interactions" value="4"/>
</dbReference>
<dbReference type="MINT" id="O15405"/>
<dbReference type="STRING" id="9606.ENSP00000219746"/>
<dbReference type="GlyCosmos" id="O15405">
    <property type="glycosylation" value="2 sites, 1 glycan"/>
</dbReference>
<dbReference type="GlyGen" id="O15405">
    <property type="glycosylation" value="3 sites, 1 O-linked glycan (2 sites)"/>
</dbReference>
<dbReference type="iPTMnet" id="O15405"/>
<dbReference type="PhosphoSitePlus" id="O15405"/>
<dbReference type="BioMuta" id="TOX3"/>
<dbReference type="jPOST" id="O15405"/>
<dbReference type="MassIVE" id="O15405"/>
<dbReference type="PaxDb" id="9606-ENSP00000219746"/>
<dbReference type="PeptideAtlas" id="O15405"/>
<dbReference type="ProteomicsDB" id="48642">
    <molecule id="O15405-1"/>
</dbReference>
<dbReference type="ProteomicsDB" id="48643">
    <molecule id="O15405-2"/>
</dbReference>
<dbReference type="Antibodypedia" id="28333">
    <property type="antibodies" value="337 antibodies from 24 providers"/>
</dbReference>
<dbReference type="DNASU" id="27324"/>
<dbReference type="Ensembl" id="ENST00000219746.14">
    <molecule id="O15405-1"/>
    <property type="protein sequence ID" value="ENSP00000219746.9"/>
    <property type="gene ID" value="ENSG00000103460.17"/>
</dbReference>
<dbReference type="Ensembl" id="ENST00000407228.7">
    <molecule id="O15405-2"/>
    <property type="protein sequence ID" value="ENSP00000385705.3"/>
    <property type="gene ID" value="ENSG00000103460.17"/>
</dbReference>
<dbReference type="GeneID" id="27324"/>
<dbReference type="KEGG" id="hsa:27324"/>
<dbReference type="MANE-Select" id="ENST00000219746.14">
    <property type="protein sequence ID" value="ENSP00000219746.9"/>
    <property type="RefSeq nucleotide sequence ID" value="NM_001080430.4"/>
    <property type="RefSeq protein sequence ID" value="NP_001073899.2"/>
</dbReference>
<dbReference type="UCSC" id="uc002egw.3">
    <molecule id="O15405-1"/>
    <property type="organism name" value="human"/>
</dbReference>
<dbReference type="AGR" id="HGNC:11972"/>
<dbReference type="CTD" id="27324"/>
<dbReference type="DisGeNET" id="27324"/>
<dbReference type="GeneCards" id="TOX3"/>
<dbReference type="HGNC" id="HGNC:11972">
    <property type="gene designation" value="TOX3"/>
</dbReference>
<dbReference type="HPA" id="ENSG00000103460">
    <property type="expression patterns" value="Tissue enhanced (intestine, retina, stomach)"/>
</dbReference>
<dbReference type="MIM" id="611416">
    <property type="type" value="gene"/>
</dbReference>
<dbReference type="neXtProt" id="NX_O15405"/>
<dbReference type="OpenTargets" id="ENSG00000103460"/>
<dbReference type="PharmGKB" id="PA162406752"/>
<dbReference type="VEuPathDB" id="HostDB:ENSG00000103460"/>
<dbReference type="eggNOG" id="KOG0381">
    <property type="taxonomic scope" value="Eukaryota"/>
</dbReference>
<dbReference type="GeneTree" id="ENSGT00940000158043"/>
<dbReference type="HOGENOM" id="CLU_030650_1_0_1"/>
<dbReference type="InParanoid" id="O15405"/>
<dbReference type="OMA" id="AYSKFGN"/>
<dbReference type="OrthoDB" id="10027956at2759"/>
<dbReference type="PAN-GO" id="O15405">
    <property type="GO annotations" value="3 GO annotations based on evolutionary models"/>
</dbReference>
<dbReference type="PhylomeDB" id="O15405"/>
<dbReference type="TreeFam" id="TF106481"/>
<dbReference type="PathwayCommons" id="O15405"/>
<dbReference type="SignaLink" id="O15405"/>
<dbReference type="BioGRID-ORCS" id="27324">
    <property type="hits" value="14 hits in 1170 CRISPR screens"/>
</dbReference>
<dbReference type="ChiTaRS" id="TOX3">
    <property type="organism name" value="human"/>
</dbReference>
<dbReference type="GenomeRNAi" id="27324"/>
<dbReference type="Pharos" id="O15405">
    <property type="development level" value="Tbio"/>
</dbReference>
<dbReference type="PRO" id="PR:O15405"/>
<dbReference type="Proteomes" id="UP000005640">
    <property type="component" value="Chromosome 16"/>
</dbReference>
<dbReference type="RNAct" id="O15405">
    <property type="molecule type" value="protein"/>
</dbReference>
<dbReference type="Bgee" id="ENSG00000103460">
    <property type="expression patterns" value="Expressed in mucosa of sigmoid colon and 152 other cell types or tissues"/>
</dbReference>
<dbReference type="ExpressionAtlas" id="O15405">
    <property type="expression patterns" value="baseline and differential"/>
</dbReference>
<dbReference type="GO" id="GO:0005829">
    <property type="term" value="C:cytosol"/>
    <property type="evidence" value="ECO:0000314"/>
    <property type="project" value="HPA"/>
</dbReference>
<dbReference type="GO" id="GO:0005654">
    <property type="term" value="C:nucleoplasm"/>
    <property type="evidence" value="ECO:0000314"/>
    <property type="project" value="HPA"/>
</dbReference>
<dbReference type="GO" id="GO:0005634">
    <property type="term" value="C:nucleus"/>
    <property type="evidence" value="ECO:0000318"/>
    <property type="project" value="GO_Central"/>
</dbReference>
<dbReference type="GO" id="GO:0003682">
    <property type="term" value="F:chromatin binding"/>
    <property type="evidence" value="ECO:0000314"/>
    <property type="project" value="UniProtKB"/>
</dbReference>
<dbReference type="GO" id="GO:0031490">
    <property type="term" value="F:chromatin DNA binding"/>
    <property type="evidence" value="ECO:0000318"/>
    <property type="project" value="GO_Central"/>
</dbReference>
<dbReference type="GO" id="GO:0051219">
    <property type="term" value="F:phosphoprotein binding"/>
    <property type="evidence" value="ECO:0000353"/>
    <property type="project" value="UniProtKB"/>
</dbReference>
<dbReference type="GO" id="GO:0042803">
    <property type="term" value="F:protein homodimerization activity"/>
    <property type="evidence" value="ECO:0000314"/>
    <property type="project" value="UniProtKB"/>
</dbReference>
<dbReference type="GO" id="GO:0003713">
    <property type="term" value="F:transcription coactivator activity"/>
    <property type="evidence" value="ECO:0000314"/>
    <property type="project" value="GO_Central"/>
</dbReference>
<dbReference type="GO" id="GO:0006915">
    <property type="term" value="P:apoptotic process"/>
    <property type="evidence" value="ECO:0007669"/>
    <property type="project" value="UniProtKB-KW"/>
</dbReference>
<dbReference type="GO" id="GO:0043524">
    <property type="term" value="P:negative regulation of neuron apoptotic process"/>
    <property type="evidence" value="ECO:0000314"/>
    <property type="project" value="UniProtKB"/>
</dbReference>
<dbReference type="GO" id="GO:0045944">
    <property type="term" value="P:positive regulation of transcription by RNA polymerase II"/>
    <property type="evidence" value="ECO:0000314"/>
    <property type="project" value="GO_Central"/>
</dbReference>
<dbReference type="GO" id="GO:0042981">
    <property type="term" value="P:regulation of apoptotic process"/>
    <property type="evidence" value="ECO:0000314"/>
    <property type="project" value="UniProtKB"/>
</dbReference>
<dbReference type="GO" id="GO:0006357">
    <property type="term" value="P:regulation of transcription by RNA polymerase II"/>
    <property type="evidence" value="ECO:0000318"/>
    <property type="project" value="GO_Central"/>
</dbReference>
<dbReference type="CDD" id="cd21995">
    <property type="entry name" value="HMG-box_TOX-like"/>
    <property type="match status" value="1"/>
</dbReference>
<dbReference type="FunFam" id="1.10.30.10:FF:000005">
    <property type="entry name" value="TOX high mobility group box family member 3"/>
    <property type="match status" value="1"/>
</dbReference>
<dbReference type="Gene3D" id="1.10.30.10">
    <property type="entry name" value="High mobility group box domain"/>
    <property type="match status" value="1"/>
</dbReference>
<dbReference type="InterPro" id="IPR009071">
    <property type="entry name" value="HMG_box_dom"/>
</dbReference>
<dbReference type="InterPro" id="IPR036910">
    <property type="entry name" value="HMG_box_dom_sf"/>
</dbReference>
<dbReference type="InterPro" id="IPR051365">
    <property type="entry name" value="TOX_HMG-box_domain"/>
</dbReference>
<dbReference type="PANTHER" id="PTHR45781">
    <property type="entry name" value="AGAP000281-PA"/>
    <property type="match status" value="1"/>
</dbReference>
<dbReference type="PANTHER" id="PTHR45781:SF3">
    <property type="entry name" value="TOX HIGH MOBILITY GROUP BOX FAMILY MEMBER 3"/>
    <property type="match status" value="1"/>
</dbReference>
<dbReference type="Pfam" id="PF00505">
    <property type="entry name" value="HMG_box"/>
    <property type="match status" value="1"/>
</dbReference>
<dbReference type="PRINTS" id="PR00886">
    <property type="entry name" value="HIGHMOBLTY12"/>
</dbReference>
<dbReference type="SMART" id="SM00398">
    <property type="entry name" value="HMG"/>
    <property type="match status" value="1"/>
</dbReference>
<dbReference type="SUPFAM" id="SSF47095">
    <property type="entry name" value="HMG-box"/>
    <property type="match status" value="1"/>
</dbReference>
<dbReference type="PROSITE" id="PS50118">
    <property type="entry name" value="HMG_BOX_2"/>
    <property type="match status" value="1"/>
</dbReference>
<gene>
    <name type="primary">TOX3</name>
    <name type="synonym">CAGF9</name>
    <name type="synonym">TNRC9</name>
</gene>
<accession>O15405</accession>
<accession>B4DRD0</accession>
<accession>B5MCW4</accession>
<feature type="chain" id="PRO_0000286353" description="TOX high mobility group box family member 3">
    <location>
        <begin position="1"/>
        <end position="576"/>
    </location>
</feature>
<feature type="DNA-binding region" description="HMG box" evidence="2">
    <location>
        <begin position="255"/>
        <end position="323"/>
    </location>
</feature>
<feature type="region of interest" description="Disordered" evidence="3">
    <location>
        <begin position="189"/>
        <end position="258"/>
    </location>
</feature>
<feature type="region of interest" description="Disordered" evidence="3">
    <location>
        <begin position="422"/>
        <end position="443"/>
    </location>
</feature>
<feature type="region of interest" description="Disordered" evidence="3">
    <location>
        <begin position="519"/>
        <end position="563"/>
    </location>
</feature>
<feature type="compositionally biased region" description="Low complexity" evidence="3">
    <location>
        <begin position="204"/>
        <end position="215"/>
    </location>
</feature>
<feature type="compositionally biased region" description="Basic and acidic residues" evidence="3">
    <location>
        <begin position="223"/>
        <end position="239"/>
    </location>
</feature>
<feature type="compositionally biased region" description="Basic residues" evidence="3">
    <location>
        <begin position="240"/>
        <end position="250"/>
    </location>
</feature>
<feature type="compositionally biased region" description="Low complexity" evidence="3">
    <location>
        <begin position="428"/>
        <end position="443"/>
    </location>
</feature>
<feature type="compositionally biased region" description="Polar residues" evidence="3">
    <location>
        <begin position="528"/>
        <end position="542"/>
    </location>
</feature>
<feature type="compositionally biased region" description="Low complexity" evidence="3">
    <location>
        <begin position="549"/>
        <end position="563"/>
    </location>
</feature>
<feature type="splice variant" id="VSP_043095" description="In isoform 2." evidence="5">
    <original>MDVRFYPAAAGDPASLDFAQCLGYYGYS</original>
    <variation>MKCQPRSGARRIEERLHYLITTYL</variation>
    <location>
        <begin position="1"/>
        <end position="28"/>
    </location>
</feature>
<feature type="splice variant" id="VSP_043096" description="In isoform 2." evidence="5">
    <location>
        <position position="52"/>
    </location>
</feature>
<feature type="sequence variant" id="VAR_055952" description="In dbSNP:rs16951186.">
    <original>V</original>
    <variation>M</variation>
    <location>
        <position position="128"/>
    </location>
</feature>
<feature type="sequence variant" id="VAR_055953" description="In dbSNP:rs13332816.">
    <original>Q</original>
    <variation>P</variation>
    <location>
        <position position="572"/>
    </location>
</feature>
<sequence length="576" mass="63342">MDVRFYPAAAGDPASLDFAQCLGYYGYSKFGNNNNYMNMAEANNAFFAASEQTFHTPSLGDEEFEIPPITPPPESDPALGMPDVLLPFQALSDPLPSQGSEFTPQFPPQSLDLPSITISRNLVEQDGVLHSSGLHMDQSHTQVSQYRQDPSLIMRSIVHMTDAARSGVMPPAQLTTINQSQLSAQLGLNLGGASMPHTSPSPPASKSATPSPSSSINEEDADEANRAIGEKRAAPDSGKKPKTPKKKKKKDPNEPQKPVSAYALFFRDTQAAIKGQNPNATFGEVSKIVASMWDSLGEEQKQVYKRKTEAAKKEYLKALAAYRASLVSKAAAESAEAQTIRSVQQTLASTNLTSSLLLNTPLSQHGTVSASPQTLQQSLPRSIAPKPLTMRLPMNQIVTSVTIAANMPSNIGAPLISSMGTTMVGSAPSTQVSPSVQTQQHQMQLQQQQQQQQQQMQQMQQQQLQQHQMHQQIQQQMQQQHFQHHMQQHLQQQQQHLQQQINQQQLQQQLQQRLQLQQLQHMQHQSQPSPRQHSPVASQITSPIPAIGSPQPASQQHQSQIQSQTQTQVLSQVSIF</sequence>
<protein>
    <recommendedName>
        <fullName>TOX high mobility group box family member 3</fullName>
    </recommendedName>
    <alternativeName>
        <fullName>CAG trinucleotide repeat-containing gene F9 protein</fullName>
    </alternativeName>
    <alternativeName>
        <fullName>Trinucleotide repeat-containing gene 9 protein</fullName>
    </alternativeName>
</protein>